<gene>
    <name evidence="1" type="primary">atpD</name>
    <name type="ordered locus">MK1674</name>
</gene>
<proteinExistence type="inferred from homology"/>
<reference key="1">
    <citation type="journal article" date="2002" name="Proc. Natl. Acad. Sci. U.S.A.">
        <title>The complete genome of hyperthermophile Methanopyrus kandleri AV19 and monophyly of archaeal methanogens.</title>
        <authorList>
            <person name="Slesarev A.I."/>
            <person name="Mezhevaya K.V."/>
            <person name="Makarova K.S."/>
            <person name="Polushin N.N."/>
            <person name="Shcherbinina O.V."/>
            <person name="Shakhova V.V."/>
            <person name="Belova G.I."/>
            <person name="Aravind L."/>
            <person name="Natale D.A."/>
            <person name="Rogozin I.B."/>
            <person name="Tatusov R.L."/>
            <person name="Wolf Y.I."/>
            <person name="Stetter K.O."/>
            <person name="Malykh A.G."/>
            <person name="Koonin E.V."/>
            <person name="Kozyavkin S.A."/>
        </authorList>
    </citation>
    <scope>NUCLEOTIDE SEQUENCE [LARGE SCALE GENOMIC DNA]</scope>
    <source>
        <strain>AV19 / DSM 6324 / JCM 9639 / NBRC 100938</strain>
    </source>
</reference>
<evidence type="ECO:0000255" key="1">
    <source>
        <dbReference type="HAMAP-Rule" id="MF_00271"/>
    </source>
</evidence>
<dbReference type="EMBL" id="AE009439">
    <property type="protein sequence ID" value="AAM02887.1"/>
    <property type="molecule type" value="Genomic_DNA"/>
</dbReference>
<dbReference type="RefSeq" id="WP_011020042.1">
    <property type="nucleotide sequence ID" value="NC_003551.1"/>
</dbReference>
<dbReference type="SMR" id="Q8TUS9"/>
<dbReference type="FunCoup" id="Q8TUS9">
    <property type="interactions" value="100"/>
</dbReference>
<dbReference type="STRING" id="190192.MK1674"/>
<dbReference type="PaxDb" id="190192-MK1674"/>
<dbReference type="EnsemblBacteria" id="AAM02887">
    <property type="protein sequence ID" value="AAM02887"/>
    <property type="gene ID" value="MK1674"/>
</dbReference>
<dbReference type="GeneID" id="1478269"/>
<dbReference type="KEGG" id="mka:MK1674"/>
<dbReference type="PATRIC" id="fig|190192.8.peg.1838"/>
<dbReference type="HOGENOM" id="CLU_069688_2_1_2"/>
<dbReference type="InParanoid" id="Q8TUS9"/>
<dbReference type="OrthoDB" id="117390at2157"/>
<dbReference type="Proteomes" id="UP000001826">
    <property type="component" value="Chromosome"/>
</dbReference>
<dbReference type="GO" id="GO:0005886">
    <property type="term" value="C:plasma membrane"/>
    <property type="evidence" value="ECO:0007669"/>
    <property type="project" value="UniProtKB-SubCell"/>
</dbReference>
<dbReference type="GO" id="GO:0005524">
    <property type="term" value="F:ATP binding"/>
    <property type="evidence" value="ECO:0007669"/>
    <property type="project" value="UniProtKB-UniRule"/>
</dbReference>
<dbReference type="GO" id="GO:0046933">
    <property type="term" value="F:proton-transporting ATP synthase activity, rotational mechanism"/>
    <property type="evidence" value="ECO:0007669"/>
    <property type="project" value="UniProtKB-UniRule"/>
</dbReference>
<dbReference type="GO" id="GO:0046961">
    <property type="term" value="F:proton-transporting ATPase activity, rotational mechanism"/>
    <property type="evidence" value="ECO:0007669"/>
    <property type="project" value="InterPro"/>
</dbReference>
<dbReference type="GO" id="GO:0042777">
    <property type="term" value="P:proton motive force-driven plasma membrane ATP synthesis"/>
    <property type="evidence" value="ECO:0007669"/>
    <property type="project" value="UniProtKB-UniRule"/>
</dbReference>
<dbReference type="FunFam" id="1.10.287.3240:FF:000007">
    <property type="entry name" value="V-type ATP synthase subunit D"/>
    <property type="match status" value="1"/>
</dbReference>
<dbReference type="Gene3D" id="1.10.287.3240">
    <property type="match status" value="1"/>
</dbReference>
<dbReference type="HAMAP" id="MF_00271">
    <property type="entry name" value="ATP_synth_D_arch"/>
    <property type="match status" value="1"/>
</dbReference>
<dbReference type="InterPro" id="IPR002699">
    <property type="entry name" value="V_ATPase_D"/>
</dbReference>
<dbReference type="NCBIfam" id="NF001545">
    <property type="entry name" value="PRK00373.1-4"/>
    <property type="match status" value="1"/>
</dbReference>
<dbReference type="NCBIfam" id="TIGR00309">
    <property type="entry name" value="V_ATPase_subD"/>
    <property type="match status" value="1"/>
</dbReference>
<dbReference type="PANTHER" id="PTHR11671">
    <property type="entry name" value="V-TYPE ATP SYNTHASE SUBUNIT D"/>
    <property type="match status" value="1"/>
</dbReference>
<dbReference type="Pfam" id="PF01813">
    <property type="entry name" value="ATP-synt_D"/>
    <property type="match status" value="1"/>
</dbReference>
<sequence>MTQEILEDVNPTRMELLKLQDRIELAKKGHKLLKEKRDALIMEFFEMVKRASEIREQAVKKLMEAYSKLAAAKVTVGEIGVERASMATGEEIKVDVGSRNVMGVVVPIIERVSEDGGSKVVYGFADTSGALDEAMRAFTEAIDAVLELAEIEETLRLMAEEIERTKRRVNALEHIVIPRLENTEKYIEMKLDEQERENFVRLKRVKDLIERKKLKEELERVVEEGAELPSFE</sequence>
<name>AATD_METKA</name>
<accession>Q8TUS9</accession>
<keyword id="KW-0066">ATP synthesis</keyword>
<keyword id="KW-1003">Cell membrane</keyword>
<keyword id="KW-0375">Hydrogen ion transport</keyword>
<keyword id="KW-0406">Ion transport</keyword>
<keyword id="KW-0472">Membrane</keyword>
<keyword id="KW-1185">Reference proteome</keyword>
<keyword id="KW-0813">Transport</keyword>
<feature type="chain" id="PRO_0000144251" description="A-type ATP synthase subunit D">
    <location>
        <begin position="1"/>
        <end position="232"/>
    </location>
</feature>
<organism>
    <name type="scientific">Methanopyrus kandleri (strain AV19 / DSM 6324 / JCM 9639 / NBRC 100938)</name>
    <dbReference type="NCBI Taxonomy" id="190192"/>
    <lineage>
        <taxon>Archaea</taxon>
        <taxon>Methanobacteriati</taxon>
        <taxon>Methanobacteriota</taxon>
        <taxon>Methanomada group</taxon>
        <taxon>Methanopyri</taxon>
        <taxon>Methanopyrales</taxon>
        <taxon>Methanopyraceae</taxon>
        <taxon>Methanopyrus</taxon>
    </lineage>
</organism>
<protein>
    <recommendedName>
        <fullName evidence="1">A-type ATP synthase subunit D</fullName>
    </recommendedName>
</protein>
<comment type="function">
    <text evidence="1">Component of the A-type ATP synthase that produces ATP from ADP in the presence of a proton gradient across the membrane.</text>
</comment>
<comment type="subunit">
    <text evidence="1">Has multiple subunits with at least A(3), B(3), C, D, E, F, H, I and proteolipid K(x).</text>
</comment>
<comment type="subcellular location">
    <subcellularLocation>
        <location evidence="1">Cell membrane</location>
        <topology evidence="1">Peripheral membrane protein</topology>
    </subcellularLocation>
</comment>
<comment type="similarity">
    <text evidence="1">Belongs to the V-ATPase D subunit family.</text>
</comment>